<feature type="chain" id="PRO_1000018799" description="Phosphoribosylaminoimidazole-succinocarboxamide synthase">
    <location>
        <begin position="1"/>
        <end position="256"/>
    </location>
</feature>
<dbReference type="EC" id="6.3.2.6" evidence="1"/>
<dbReference type="EMBL" id="CP000239">
    <property type="protein sequence ID" value="ABC98464.1"/>
    <property type="molecule type" value="Genomic_DNA"/>
</dbReference>
<dbReference type="RefSeq" id="WP_011429155.1">
    <property type="nucleotide sequence ID" value="NC_007775.1"/>
</dbReference>
<dbReference type="SMR" id="Q2JXL8"/>
<dbReference type="STRING" id="321327.CYA_0240"/>
<dbReference type="KEGG" id="cya:CYA_0240"/>
<dbReference type="eggNOG" id="COG0152">
    <property type="taxonomic scope" value="Bacteria"/>
</dbReference>
<dbReference type="HOGENOM" id="CLU_061495_2_0_3"/>
<dbReference type="OrthoDB" id="9801549at2"/>
<dbReference type="UniPathway" id="UPA00074">
    <property type="reaction ID" value="UER00131"/>
</dbReference>
<dbReference type="Proteomes" id="UP000008818">
    <property type="component" value="Chromosome"/>
</dbReference>
<dbReference type="GO" id="GO:0005524">
    <property type="term" value="F:ATP binding"/>
    <property type="evidence" value="ECO:0007669"/>
    <property type="project" value="UniProtKB-KW"/>
</dbReference>
<dbReference type="GO" id="GO:0004639">
    <property type="term" value="F:phosphoribosylaminoimidazolesuccinocarboxamide synthase activity"/>
    <property type="evidence" value="ECO:0007669"/>
    <property type="project" value="UniProtKB-UniRule"/>
</dbReference>
<dbReference type="GO" id="GO:0006189">
    <property type="term" value="P:'de novo' IMP biosynthetic process"/>
    <property type="evidence" value="ECO:0007669"/>
    <property type="project" value="UniProtKB-UniRule"/>
</dbReference>
<dbReference type="GO" id="GO:0009236">
    <property type="term" value="P:cobalamin biosynthetic process"/>
    <property type="evidence" value="ECO:0007669"/>
    <property type="project" value="InterPro"/>
</dbReference>
<dbReference type="CDD" id="cd01415">
    <property type="entry name" value="SAICAR_synt_PurC"/>
    <property type="match status" value="1"/>
</dbReference>
<dbReference type="FunFam" id="3.30.470.20:FF:000006">
    <property type="entry name" value="Phosphoribosylaminoimidazole-succinocarboxamide synthase"/>
    <property type="match status" value="1"/>
</dbReference>
<dbReference type="Gene3D" id="3.30.470.20">
    <property type="entry name" value="ATP-grasp fold, B domain"/>
    <property type="match status" value="1"/>
</dbReference>
<dbReference type="Gene3D" id="3.30.200.20">
    <property type="entry name" value="Phosphorylase Kinase, domain 1"/>
    <property type="match status" value="1"/>
</dbReference>
<dbReference type="HAMAP" id="MF_00137">
    <property type="entry name" value="SAICAR_synth"/>
    <property type="match status" value="1"/>
</dbReference>
<dbReference type="InterPro" id="IPR028923">
    <property type="entry name" value="SAICAR_synt/ADE2_N"/>
</dbReference>
<dbReference type="InterPro" id="IPR033934">
    <property type="entry name" value="SAICAR_synt_PurC"/>
</dbReference>
<dbReference type="InterPro" id="IPR001636">
    <property type="entry name" value="SAICAR_synth"/>
</dbReference>
<dbReference type="InterPro" id="IPR050089">
    <property type="entry name" value="SAICAR_synthetase"/>
</dbReference>
<dbReference type="InterPro" id="IPR018236">
    <property type="entry name" value="SAICAR_synthetase_CS"/>
</dbReference>
<dbReference type="NCBIfam" id="TIGR00081">
    <property type="entry name" value="purC"/>
    <property type="match status" value="1"/>
</dbReference>
<dbReference type="PANTHER" id="PTHR43599">
    <property type="entry name" value="MULTIFUNCTIONAL PROTEIN ADE2"/>
    <property type="match status" value="1"/>
</dbReference>
<dbReference type="PANTHER" id="PTHR43599:SF3">
    <property type="entry name" value="SI:DKEY-6E2.2"/>
    <property type="match status" value="1"/>
</dbReference>
<dbReference type="Pfam" id="PF01259">
    <property type="entry name" value="SAICAR_synt"/>
    <property type="match status" value="1"/>
</dbReference>
<dbReference type="SUPFAM" id="SSF56104">
    <property type="entry name" value="SAICAR synthase-like"/>
    <property type="match status" value="1"/>
</dbReference>
<dbReference type="PROSITE" id="PS01057">
    <property type="entry name" value="SAICAR_SYNTHETASE_1"/>
    <property type="match status" value="1"/>
</dbReference>
<dbReference type="PROSITE" id="PS01058">
    <property type="entry name" value="SAICAR_SYNTHETASE_2"/>
    <property type="match status" value="1"/>
</dbReference>
<proteinExistence type="inferred from homology"/>
<comment type="catalytic activity">
    <reaction evidence="1">
        <text>5-amino-1-(5-phospho-D-ribosyl)imidazole-4-carboxylate + L-aspartate + ATP = (2S)-2-[5-amino-1-(5-phospho-beta-D-ribosyl)imidazole-4-carboxamido]succinate + ADP + phosphate + 2 H(+)</text>
        <dbReference type="Rhea" id="RHEA:22628"/>
        <dbReference type="ChEBI" id="CHEBI:15378"/>
        <dbReference type="ChEBI" id="CHEBI:29991"/>
        <dbReference type="ChEBI" id="CHEBI:30616"/>
        <dbReference type="ChEBI" id="CHEBI:43474"/>
        <dbReference type="ChEBI" id="CHEBI:58443"/>
        <dbReference type="ChEBI" id="CHEBI:77657"/>
        <dbReference type="ChEBI" id="CHEBI:456216"/>
        <dbReference type="EC" id="6.3.2.6"/>
    </reaction>
</comment>
<comment type="pathway">
    <text evidence="1">Purine metabolism; IMP biosynthesis via de novo pathway; 5-amino-1-(5-phospho-D-ribosyl)imidazole-4-carboxamide from 5-amino-1-(5-phospho-D-ribosyl)imidazole-4-carboxylate: step 1/2.</text>
</comment>
<comment type="similarity">
    <text evidence="1">Belongs to the SAICAR synthetase family.</text>
</comment>
<name>PUR7_SYNJA</name>
<accession>Q2JXL8</accession>
<protein>
    <recommendedName>
        <fullName evidence="1">Phosphoribosylaminoimidazole-succinocarboxamide synthase</fullName>
        <ecNumber evidence="1">6.3.2.6</ecNumber>
    </recommendedName>
    <alternativeName>
        <fullName evidence="1">SAICAR synthetase</fullName>
    </alternativeName>
</protein>
<organism>
    <name type="scientific">Synechococcus sp. (strain JA-3-3Ab)</name>
    <name type="common">Cyanobacteria bacterium Yellowstone A-Prime</name>
    <dbReference type="NCBI Taxonomy" id="321327"/>
    <lineage>
        <taxon>Bacteria</taxon>
        <taxon>Bacillati</taxon>
        <taxon>Cyanobacteriota</taxon>
        <taxon>Cyanophyceae</taxon>
        <taxon>Synechococcales</taxon>
        <taxon>Synechococcaceae</taxon>
        <taxon>Synechococcus</taxon>
    </lineage>
</organism>
<keyword id="KW-0067">ATP-binding</keyword>
<keyword id="KW-0436">Ligase</keyword>
<keyword id="KW-0547">Nucleotide-binding</keyword>
<keyword id="KW-0658">Purine biosynthesis</keyword>
<evidence type="ECO:0000255" key="1">
    <source>
        <dbReference type="HAMAP-Rule" id="MF_00137"/>
    </source>
</evidence>
<sequence length="256" mass="28763">MPFSPQELLYEGKAKRIYRTADPRVYLCQYKDDATAFNAQKRGSIAGKGEVNCTVSSHVFAYLAQQGIPNHFLAQTGPTEMQVRALHILPLEVVVRNRTAGSLCQRLGLEQGLPIEPPLVEFYYKNDALGDPLVTPDHIRLLHLATPEQVEKLGSLALAVNTHLGNFWRRCRLELVDFKLEFGLDEEGQIWLADEISPDTCRLWDLQGTEPRVLDKDLFRFDLGDPAAGYQEVLQRVLQATDPNLPSPAARERGRG</sequence>
<reference key="1">
    <citation type="journal article" date="2007" name="ISME J.">
        <title>Population level functional diversity in a microbial community revealed by comparative genomic and metagenomic analyses.</title>
        <authorList>
            <person name="Bhaya D."/>
            <person name="Grossman A.R."/>
            <person name="Steunou A.-S."/>
            <person name="Khuri N."/>
            <person name="Cohan F.M."/>
            <person name="Hamamura N."/>
            <person name="Melendrez M.C."/>
            <person name="Bateson M.M."/>
            <person name="Ward D.M."/>
            <person name="Heidelberg J.F."/>
        </authorList>
    </citation>
    <scope>NUCLEOTIDE SEQUENCE [LARGE SCALE GENOMIC DNA]</scope>
    <source>
        <strain>JA-3-3Ab</strain>
    </source>
</reference>
<gene>
    <name evidence="1" type="primary">purC</name>
    <name type="ordered locus">CYA_0240</name>
</gene>